<protein>
    <recommendedName>
        <fullName evidence="1">Flagellar assembly factor FliW</fullName>
    </recommendedName>
</protein>
<name>FLIW_CLOB6</name>
<evidence type="ECO:0000255" key="1">
    <source>
        <dbReference type="HAMAP-Rule" id="MF_01185"/>
    </source>
</evidence>
<keyword id="KW-1005">Bacterial flagellum biogenesis</keyword>
<keyword id="KW-0143">Chaperone</keyword>
<keyword id="KW-0963">Cytoplasm</keyword>
<keyword id="KW-0810">Translation regulation</keyword>
<proteinExistence type="inferred from homology"/>
<organism>
    <name type="scientific">Clostridium botulinum (strain 657 / Type Ba4)</name>
    <dbReference type="NCBI Taxonomy" id="515621"/>
    <lineage>
        <taxon>Bacteria</taxon>
        <taxon>Bacillati</taxon>
        <taxon>Bacillota</taxon>
        <taxon>Clostridia</taxon>
        <taxon>Eubacteriales</taxon>
        <taxon>Clostridiaceae</taxon>
        <taxon>Clostridium</taxon>
    </lineage>
</organism>
<sequence>MKLNTKYHGSIEYEERDVIYFEKGIPGFEELNKFIIFPVEDNEVFLVFHSIENEDIGIIVTSPFNIEKDYEIQLEEEQITNLKLQDEKDALVLNTVTLDSDIDKITVNLRAPIIINIKEKIGEQIIINSDKYKVKHPLFKEEA</sequence>
<gene>
    <name evidence="1" type="primary">fliW</name>
    <name type="ordered locus">CLJ_B2965</name>
</gene>
<reference key="1">
    <citation type="submission" date="2008-05" db="EMBL/GenBank/DDBJ databases">
        <title>Genome sequence of Clostridium botulinum Ba4 strain 657.</title>
        <authorList>
            <person name="Shrivastava S."/>
            <person name="Brown J.L."/>
            <person name="Bruce D."/>
            <person name="Detter C."/>
            <person name="Munk C."/>
            <person name="Smith L.A."/>
            <person name="Smith T.J."/>
            <person name="Sutton G."/>
            <person name="Brettin T.S."/>
        </authorList>
    </citation>
    <scope>NUCLEOTIDE SEQUENCE [LARGE SCALE GENOMIC DNA]</scope>
    <source>
        <strain>657 / Type Ba4</strain>
    </source>
</reference>
<comment type="function">
    <text evidence="1">Acts as an anti-CsrA protein, binds CsrA and prevents it from repressing translation of its target genes, one of which is flagellin. Binds to flagellin and participates in the assembly of the flagellum.</text>
</comment>
<comment type="subunit">
    <text evidence="1">Interacts with translational regulator CsrA and flagellin(s).</text>
</comment>
<comment type="subcellular location">
    <subcellularLocation>
        <location evidence="1">Cytoplasm</location>
    </subcellularLocation>
</comment>
<comment type="similarity">
    <text evidence="1">Belongs to the FliW family.</text>
</comment>
<dbReference type="EMBL" id="CP001083">
    <property type="protein sequence ID" value="ACQ51649.1"/>
    <property type="molecule type" value="Genomic_DNA"/>
</dbReference>
<dbReference type="RefSeq" id="WP_003361303.1">
    <property type="nucleotide sequence ID" value="NC_012658.1"/>
</dbReference>
<dbReference type="SMR" id="C3L207"/>
<dbReference type="KEGG" id="cbi:CLJ_B2965"/>
<dbReference type="HOGENOM" id="CLU_112356_0_2_9"/>
<dbReference type="Proteomes" id="UP000002333">
    <property type="component" value="Chromosome"/>
</dbReference>
<dbReference type="GO" id="GO:0005737">
    <property type="term" value="C:cytoplasm"/>
    <property type="evidence" value="ECO:0007669"/>
    <property type="project" value="UniProtKB-SubCell"/>
</dbReference>
<dbReference type="GO" id="GO:0044780">
    <property type="term" value="P:bacterial-type flagellum assembly"/>
    <property type="evidence" value="ECO:0007669"/>
    <property type="project" value="UniProtKB-UniRule"/>
</dbReference>
<dbReference type="GO" id="GO:0006417">
    <property type="term" value="P:regulation of translation"/>
    <property type="evidence" value="ECO:0007669"/>
    <property type="project" value="UniProtKB-KW"/>
</dbReference>
<dbReference type="Gene3D" id="2.30.290.10">
    <property type="entry name" value="BH3618-like"/>
    <property type="match status" value="1"/>
</dbReference>
<dbReference type="HAMAP" id="MF_01185">
    <property type="entry name" value="FliW"/>
    <property type="match status" value="1"/>
</dbReference>
<dbReference type="InterPro" id="IPR003775">
    <property type="entry name" value="Flagellar_assembly_factor_FliW"/>
</dbReference>
<dbReference type="InterPro" id="IPR024046">
    <property type="entry name" value="Flagellar_assmbl_FliW_dom_sf"/>
</dbReference>
<dbReference type="NCBIfam" id="NF009793">
    <property type="entry name" value="PRK13285.1-1"/>
    <property type="match status" value="1"/>
</dbReference>
<dbReference type="PANTHER" id="PTHR39190">
    <property type="entry name" value="FLAGELLAR ASSEMBLY FACTOR FLIW"/>
    <property type="match status" value="1"/>
</dbReference>
<dbReference type="PANTHER" id="PTHR39190:SF1">
    <property type="entry name" value="FLAGELLAR ASSEMBLY FACTOR FLIW"/>
    <property type="match status" value="1"/>
</dbReference>
<dbReference type="Pfam" id="PF02623">
    <property type="entry name" value="FliW"/>
    <property type="match status" value="1"/>
</dbReference>
<dbReference type="SUPFAM" id="SSF141457">
    <property type="entry name" value="BH3618-like"/>
    <property type="match status" value="1"/>
</dbReference>
<feature type="chain" id="PRO_1000213772" description="Flagellar assembly factor FliW">
    <location>
        <begin position="1"/>
        <end position="143"/>
    </location>
</feature>
<accession>C3L207</accession>